<name>TGT_CYAP4</name>
<reference key="1">
    <citation type="journal article" date="2011" name="MBio">
        <title>Novel metabolic attributes of the genus Cyanothece, comprising a group of unicellular nitrogen-fixing Cyanobacteria.</title>
        <authorList>
            <person name="Bandyopadhyay A."/>
            <person name="Elvitigala T."/>
            <person name="Welsh E."/>
            <person name="Stockel J."/>
            <person name="Liberton M."/>
            <person name="Min H."/>
            <person name="Sherman L.A."/>
            <person name="Pakrasi H.B."/>
        </authorList>
    </citation>
    <scope>NUCLEOTIDE SEQUENCE [LARGE SCALE GENOMIC DNA]</scope>
    <source>
        <strain>PCC 7425 / ATCC 29141</strain>
    </source>
</reference>
<accession>B8HX02</accession>
<keyword id="KW-0328">Glycosyltransferase</keyword>
<keyword id="KW-0479">Metal-binding</keyword>
<keyword id="KW-0671">Queuosine biosynthesis</keyword>
<keyword id="KW-0808">Transferase</keyword>
<keyword id="KW-0819">tRNA processing</keyword>
<keyword id="KW-0862">Zinc</keyword>
<dbReference type="EC" id="2.4.2.29" evidence="1"/>
<dbReference type="EMBL" id="CP001344">
    <property type="protein sequence ID" value="ACL43305.1"/>
    <property type="molecule type" value="Genomic_DNA"/>
</dbReference>
<dbReference type="SMR" id="B8HX02"/>
<dbReference type="STRING" id="395961.Cyan7425_0919"/>
<dbReference type="KEGG" id="cyn:Cyan7425_0919"/>
<dbReference type="eggNOG" id="COG0343">
    <property type="taxonomic scope" value="Bacteria"/>
</dbReference>
<dbReference type="HOGENOM" id="CLU_022060_0_1_3"/>
<dbReference type="UniPathway" id="UPA00392"/>
<dbReference type="GO" id="GO:0005829">
    <property type="term" value="C:cytosol"/>
    <property type="evidence" value="ECO:0007669"/>
    <property type="project" value="TreeGrafter"/>
</dbReference>
<dbReference type="GO" id="GO:0046872">
    <property type="term" value="F:metal ion binding"/>
    <property type="evidence" value="ECO:0007669"/>
    <property type="project" value="UniProtKB-KW"/>
</dbReference>
<dbReference type="GO" id="GO:0008479">
    <property type="term" value="F:tRNA-guanosine(34) queuine transglycosylase activity"/>
    <property type="evidence" value="ECO:0007669"/>
    <property type="project" value="UniProtKB-UniRule"/>
</dbReference>
<dbReference type="GO" id="GO:0008616">
    <property type="term" value="P:queuosine biosynthetic process"/>
    <property type="evidence" value="ECO:0007669"/>
    <property type="project" value="UniProtKB-UniRule"/>
</dbReference>
<dbReference type="GO" id="GO:0002099">
    <property type="term" value="P:tRNA wobble guanine modification"/>
    <property type="evidence" value="ECO:0007669"/>
    <property type="project" value="TreeGrafter"/>
</dbReference>
<dbReference type="GO" id="GO:0101030">
    <property type="term" value="P:tRNA-guanine transglycosylation"/>
    <property type="evidence" value="ECO:0007669"/>
    <property type="project" value="InterPro"/>
</dbReference>
<dbReference type="FunFam" id="3.20.20.105:FF:000001">
    <property type="entry name" value="Queuine tRNA-ribosyltransferase"/>
    <property type="match status" value="1"/>
</dbReference>
<dbReference type="Gene3D" id="3.20.20.105">
    <property type="entry name" value="Queuine tRNA-ribosyltransferase-like"/>
    <property type="match status" value="1"/>
</dbReference>
<dbReference type="HAMAP" id="MF_00168">
    <property type="entry name" value="Q_tRNA_Tgt"/>
    <property type="match status" value="1"/>
</dbReference>
<dbReference type="InterPro" id="IPR050076">
    <property type="entry name" value="ArchSynthase1/Queuine_TRR"/>
</dbReference>
<dbReference type="InterPro" id="IPR004803">
    <property type="entry name" value="TGT"/>
</dbReference>
<dbReference type="InterPro" id="IPR036511">
    <property type="entry name" value="TGT-like_sf"/>
</dbReference>
<dbReference type="InterPro" id="IPR002616">
    <property type="entry name" value="tRNA_ribo_trans-like"/>
</dbReference>
<dbReference type="NCBIfam" id="TIGR00430">
    <property type="entry name" value="Q_tRNA_tgt"/>
    <property type="match status" value="1"/>
</dbReference>
<dbReference type="NCBIfam" id="TIGR00449">
    <property type="entry name" value="tgt_general"/>
    <property type="match status" value="1"/>
</dbReference>
<dbReference type="PANTHER" id="PTHR46499">
    <property type="entry name" value="QUEUINE TRNA-RIBOSYLTRANSFERASE"/>
    <property type="match status" value="1"/>
</dbReference>
<dbReference type="PANTHER" id="PTHR46499:SF1">
    <property type="entry name" value="QUEUINE TRNA-RIBOSYLTRANSFERASE"/>
    <property type="match status" value="1"/>
</dbReference>
<dbReference type="Pfam" id="PF01702">
    <property type="entry name" value="TGT"/>
    <property type="match status" value="1"/>
</dbReference>
<dbReference type="SUPFAM" id="SSF51713">
    <property type="entry name" value="tRNA-guanine transglycosylase"/>
    <property type="match status" value="1"/>
</dbReference>
<protein>
    <recommendedName>
        <fullName evidence="1">Queuine tRNA-ribosyltransferase</fullName>
        <ecNumber evidence="1">2.4.2.29</ecNumber>
    </recommendedName>
    <alternativeName>
        <fullName evidence="1">Guanine insertion enzyme</fullName>
    </alternativeName>
    <alternativeName>
        <fullName evidence="1">tRNA-guanine transglycosylase</fullName>
    </alternativeName>
</protein>
<sequence>MNDSLQAIPNQPFSFFTQASCSHTQARAGQFFTPHGVVETPRFMPVGTLANIKTVTPEQLRGTGAQMILANTYHLHLQPGEGIVAAAGGLHRFMGWTGPILTDSGGFQVFSLSELRSIAEAGVTFRSPRDGEEIYLSPEKAIAIQNQLGADVIMAFDECAPYPADRSTVTEAVERTTRWLERCCKAHDRVEDQALFGIIQGGTYGDLRQQSARSLVEFDLPGYAIGGVSVGEPPELIEKIVKFTTPLLPEHKPRYLMGVGTYREMVQAIAAGIDLFDCVIPTRLARHGNALVRGERWNLKNSRFREDFQPLDQSCACYTCQNFSRAYLSHLLRARELLAYTLLSIHNITELISFTQKIRQAILHDRFSSEFASWLTSPSPS</sequence>
<feature type="chain" id="PRO_1000197994" description="Queuine tRNA-ribosyltransferase">
    <location>
        <begin position="1"/>
        <end position="381"/>
    </location>
</feature>
<feature type="region of interest" description="RNA binding" evidence="1">
    <location>
        <begin position="258"/>
        <end position="264"/>
    </location>
</feature>
<feature type="region of interest" description="RNA binding; important for wobble base 34 recognition" evidence="1">
    <location>
        <begin position="282"/>
        <end position="286"/>
    </location>
</feature>
<feature type="active site" description="Proton acceptor" evidence="1">
    <location>
        <position position="103"/>
    </location>
</feature>
<feature type="active site" description="Nucleophile" evidence="1">
    <location>
        <position position="277"/>
    </location>
</feature>
<feature type="binding site" evidence="1">
    <location>
        <begin position="103"/>
        <end position="107"/>
    </location>
    <ligand>
        <name>substrate</name>
    </ligand>
</feature>
<feature type="binding site" evidence="1">
    <location>
        <position position="157"/>
    </location>
    <ligand>
        <name>substrate</name>
    </ligand>
</feature>
<feature type="binding site" evidence="1">
    <location>
        <position position="200"/>
    </location>
    <ligand>
        <name>substrate</name>
    </ligand>
</feature>
<feature type="binding site" evidence="1">
    <location>
        <position position="227"/>
    </location>
    <ligand>
        <name>substrate</name>
    </ligand>
</feature>
<feature type="binding site" evidence="1">
    <location>
        <position position="315"/>
    </location>
    <ligand>
        <name>Zn(2+)</name>
        <dbReference type="ChEBI" id="CHEBI:29105"/>
    </ligand>
</feature>
<feature type="binding site" evidence="1">
    <location>
        <position position="317"/>
    </location>
    <ligand>
        <name>Zn(2+)</name>
        <dbReference type="ChEBI" id="CHEBI:29105"/>
    </ligand>
</feature>
<feature type="binding site" evidence="1">
    <location>
        <position position="320"/>
    </location>
    <ligand>
        <name>Zn(2+)</name>
        <dbReference type="ChEBI" id="CHEBI:29105"/>
    </ligand>
</feature>
<feature type="binding site" evidence="1">
    <location>
        <position position="346"/>
    </location>
    <ligand>
        <name>Zn(2+)</name>
        <dbReference type="ChEBI" id="CHEBI:29105"/>
    </ligand>
</feature>
<comment type="function">
    <text evidence="1">Catalyzes the base-exchange of a guanine (G) residue with the queuine precursor 7-aminomethyl-7-deazaguanine (PreQ1) at position 34 (anticodon wobble position) in tRNAs with GU(N) anticodons (tRNA-Asp, -Asn, -His and -Tyr). Catalysis occurs through a double-displacement mechanism. The nucleophile active site attacks the C1' of nucleotide 34 to detach the guanine base from the RNA, forming a covalent enzyme-RNA intermediate. The proton acceptor active site deprotonates the incoming PreQ1, allowing a nucleophilic attack on the C1' of the ribose to form the product. After dissociation, two additional enzymatic reactions on the tRNA convert PreQ1 to queuine (Q), resulting in the hypermodified nucleoside queuosine (7-(((4,5-cis-dihydroxy-2-cyclopenten-1-yl)amino)methyl)-7-deazaguanosine).</text>
</comment>
<comment type="catalytic activity">
    <reaction evidence="1">
        <text>7-aminomethyl-7-carbaguanine + guanosine(34) in tRNA = 7-aminomethyl-7-carbaguanosine(34) in tRNA + guanine</text>
        <dbReference type="Rhea" id="RHEA:24104"/>
        <dbReference type="Rhea" id="RHEA-COMP:10341"/>
        <dbReference type="Rhea" id="RHEA-COMP:10342"/>
        <dbReference type="ChEBI" id="CHEBI:16235"/>
        <dbReference type="ChEBI" id="CHEBI:58703"/>
        <dbReference type="ChEBI" id="CHEBI:74269"/>
        <dbReference type="ChEBI" id="CHEBI:82833"/>
        <dbReference type="EC" id="2.4.2.29"/>
    </reaction>
</comment>
<comment type="cofactor">
    <cofactor evidence="1">
        <name>Zn(2+)</name>
        <dbReference type="ChEBI" id="CHEBI:29105"/>
    </cofactor>
    <text evidence="1">Binds 1 zinc ion per subunit.</text>
</comment>
<comment type="pathway">
    <text evidence="1">tRNA modification; tRNA-queuosine biosynthesis.</text>
</comment>
<comment type="subunit">
    <text evidence="1">Homodimer. Within each dimer, one monomer is responsible for RNA recognition and catalysis, while the other monomer binds to the replacement base PreQ1.</text>
</comment>
<comment type="similarity">
    <text evidence="1">Belongs to the queuine tRNA-ribosyltransferase family.</text>
</comment>
<evidence type="ECO:0000255" key="1">
    <source>
        <dbReference type="HAMAP-Rule" id="MF_00168"/>
    </source>
</evidence>
<gene>
    <name evidence="1" type="primary">tgt</name>
    <name type="ordered locus">Cyan7425_0919</name>
</gene>
<proteinExistence type="inferred from homology"/>
<organism>
    <name type="scientific">Cyanothece sp. (strain PCC 7425 / ATCC 29141)</name>
    <dbReference type="NCBI Taxonomy" id="395961"/>
    <lineage>
        <taxon>Bacteria</taxon>
        <taxon>Bacillati</taxon>
        <taxon>Cyanobacteriota</taxon>
        <taxon>Cyanophyceae</taxon>
        <taxon>Gomontiellales</taxon>
        <taxon>Cyanothecaceae</taxon>
        <taxon>Cyanothece</taxon>
    </lineage>
</organism>